<protein>
    <recommendedName>
        <fullName>UPF0688 protein C1orf174 homolog</fullName>
    </recommendedName>
</protein>
<accession>A0JM83</accession>
<reference key="1">
    <citation type="submission" date="2006-10" db="EMBL/GenBank/DDBJ databases">
        <authorList>
            <consortium name="NIH - Xenopus Gene Collection (XGC) project"/>
        </authorList>
    </citation>
    <scope>NUCLEOTIDE SEQUENCE [LARGE SCALE MRNA]</scope>
    <source>
        <strain>N6</strain>
        <tissue>Oviduct</tissue>
    </source>
</reference>
<comment type="subcellular location">
    <subcellularLocation>
        <location evidence="1">Nucleus</location>
    </subcellularLocation>
</comment>
<comment type="similarity">
    <text evidence="3">Belongs to the UPF0688 family.</text>
</comment>
<comment type="sequence caution" evidence="3">
    <conflict type="erroneous initiation">
        <sequence resource="EMBL-CDS" id="AAI25778"/>
    </conflict>
</comment>
<keyword id="KW-0539">Nucleus</keyword>
<keyword id="KW-1185">Reference proteome</keyword>
<proteinExistence type="evidence at transcript level"/>
<feature type="chain" id="PRO_0000294248" description="UPF0688 protein C1orf174 homolog">
    <location>
        <begin position="1"/>
        <end position="227"/>
    </location>
</feature>
<feature type="region of interest" description="Disordered" evidence="2">
    <location>
        <begin position="1"/>
        <end position="122"/>
    </location>
</feature>
<feature type="region of interest" description="Disordered" evidence="2">
    <location>
        <begin position="207"/>
        <end position="227"/>
    </location>
</feature>
<feature type="compositionally biased region" description="Basic and acidic residues" evidence="2">
    <location>
        <begin position="47"/>
        <end position="63"/>
    </location>
</feature>
<feature type="compositionally biased region" description="Polar residues" evidence="2">
    <location>
        <begin position="77"/>
        <end position="104"/>
    </location>
</feature>
<feature type="compositionally biased region" description="Polar residues" evidence="2">
    <location>
        <begin position="113"/>
        <end position="122"/>
    </location>
</feature>
<evidence type="ECO:0000250" key="1"/>
<evidence type="ECO:0000256" key="2">
    <source>
        <dbReference type="SAM" id="MobiDB-lite"/>
    </source>
</evidence>
<evidence type="ECO:0000305" key="3"/>
<dbReference type="EMBL" id="BC125777">
    <property type="protein sequence ID" value="AAI25778.1"/>
    <property type="status" value="ALT_INIT"/>
    <property type="molecule type" value="mRNA"/>
</dbReference>
<dbReference type="RefSeq" id="NP_001263619.1">
    <property type="nucleotide sequence ID" value="NM_001276690.2"/>
</dbReference>
<dbReference type="RefSeq" id="XP_012822180.1">
    <property type="nucleotide sequence ID" value="XM_012966726.3"/>
</dbReference>
<dbReference type="FunCoup" id="A0JM83">
    <property type="interactions" value="1448"/>
</dbReference>
<dbReference type="STRING" id="8364.ENSXETP00000012158"/>
<dbReference type="PaxDb" id="8364-ENSXETP00000013296"/>
<dbReference type="GeneID" id="779604"/>
<dbReference type="KEGG" id="xtr:779604"/>
<dbReference type="AGR" id="Xenbase:XB-GENE-5831587"/>
<dbReference type="CTD" id="138850445"/>
<dbReference type="Xenbase" id="XB-GENE-5831587">
    <property type="gene designation" value="c7h1orf174"/>
</dbReference>
<dbReference type="eggNOG" id="ENOG502SBCG">
    <property type="taxonomic scope" value="Eukaryota"/>
</dbReference>
<dbReference type="HOGENOM" id="CLU_096286_0_0_1"/>
<dbReference type="InParanoid" id="A0JM83"/>
<dbReference type="OMA" id="NEPLECY"/>
<dbReference type="OrthoDB" id="8730115at2759"/>
<dbReference type="PhylomeDB" id="A0JM83"/>
<dbReference type="TreeFam" id="TF336079"/>
<dbReference type="Proteomes" id="UP000008143">
    <property type="component" value="Chromosome 7"/>
</dbReference>
<dbReference type="Bgee" id="ENSXETG00000006036">
    <property type="expression patterns" value="Expressed in heart and 16 other cell types or tissues"/>
</dbReference>
<dbReference type="GO" id="GO:0005634">
    <property type="term" value="C:nucleus"/>
    <property type="evidence" value="ECO:0007669"/>
    <property type="project" value="UniProtKB-SubCell"/>
</dbReference>
<dbReference type="InterPro" id="IPR031530">
    <property type="entry name" value="UPF0688"/>
</dbReference>
<dbReference type="PANTHER" id="PTHR28491">
    <property type="entry name" value="UPF0688 PROTEIN C1ORF174"/>
    <property type="match status" value="1"/>
</dbReference>
<dbReference type="PANTHER" id="PTHR28491:SF1">
    <property type="entry name" value="UPF0688 PROTEIN C1ORF174"/>
    <property type="match status" value="1"/>
</dbReference>
<dbReference type="Pfam" id="PF15772">
    <property type="entry name" value="UPF0688"/>
    <property type="match status" value="1"/>
</dbReference>
<organism>
    <name type="scientific">Xenopus tropicalis</name>
    <name type="common">Western clawed frog</name>
    <name type="synonym">Silurana tropicalis</name>
    <dbReference type="NCBI Taxonomy" id="8364"/>
    <lineage>
        <taxon>Eukaryota</taxon>
        <taxon>Metazoa</taxon>
        <taxon>Chordata</taxon>
        <taxon>Craniata</taxon>
        <taxon>Vertebrata</taxon>
        <taxon>Euteleostomi</taxon>
        <taxon>Amphibia</taxon>
        <taxon>Batrachia</taxon>
        <taxon>Anura</taxon>
        <taxon>Pipoidea</taxon>
        <taxon>Pipidae</taxon>
        <taxon>Xenopodinae</taxon>
        <taxon>Xenopus</taxon>
        <taxon>Silurana</taxon>
    </lineage>
</organism>
<sequence length="227" mass="24952">MRKRKLSDGVRCSARQKNRSCSGAQSSTDHEADTYGPKKKAASSNNTEKESSKKLRKDEKGPVEADENELLNKIDNAASNESSNVNDSQQSEKSITNTKDNGTRCSKLRANTRLPSSPVSDLNEVSCNGLTDDSGDGTGFIHKTCSEPSKLREIYLNGSPFVDEDSNQPMPLGLFFENADLMQDLPPAVPSCASMSRRELRNLHFRAKEEDEDDDDYVDGLANEGNI</sequence>
<name>CA174_XENTR</name>